<keyword id="KW-0143">Chaperone</keyword>
<keyword id="KW-0574">Periplasm</keyword>
<keyword id="KW-0653">Protein transport</keyword>
<keyword id="KW-0732">Signal</keyword>
<keyword id="KW-0813">Transport</keyword>
<sequence>MHRQLRYAVLATALFASTAFAGARQELDTFTRGLKGLDGQFSQRVTDANGRVKENSSGRVALATPRQFRWEYAKPYKQLIVADGKKVWVFDPDLEQVTVRAQGSEEQNSPLVALIDPTRLDKQYDVSEEAAPRDGLQWLSLTPKVDTDASFQMASLGFGKDGLAKMEVVDAVGQRTAISFSGWKRNPAFAADTFRYTPGKGVDVVGDAQ</sequence>
<reference key="1">
    <citation type="journal article" date="2005" name="Genome Res.">
        <title>Comparative and functional genomic analyses of the pathogenicity of phytopathogen Xanthomonas campestris pv. campestris.</title>
        <authorList>
            <person name="Qian W."/>
            <person name="Jia Y."/>
            <person name="Ren S.-X."/>
            <person name="He Y.-Q."/>
            <person name="Feng J.-X."/>
            <person name="Lu L.-F."/>
            <person name="Sun Q."/>
            <person name="Ying G."/>
            <person name="Tang D.-J."/>
            <person name="Tang H."/>
            <person name="Wu W."/>
            <person name="Hao P."/>
            <person name="Wang L."/>
            <person name="Jiang B.-L."/>
            <person name="Zeng S."/>
            <person name="Gu W.-Y."/>
            <person name="Lu G."/>
            <person name="Rong L."/>
            <person name="Tian Y."/>
            <person name="Yao Z."/>
            <person name="Fu G."/>
            <person name="Chen B."/>
            <person name="Fang R."/>
            <person name="Qiang B."/>
            <person name="Chen Z."/>
            <person name="Zhao G.-P."/>
            <person name="Tang J.-L."/>
            <person name="He C."/>
        </authorList>
    </citation>
    <scope>NUCLEOTIDE SEQUENCE [LARGE SCALE GENOMIC DNA]</scope>
    <source>
        <strain>8004</strain>
    </source>
</reference>
<evidence type="ECO:0000255" key="1">
    <source>
        <dbReference type="HAMAP-Rule" id="MF_00240"/>
    </source>
</evidence>
<feature type="signal peptide" evidence="1">
    <location>
        <begin position="1"/>
        <end position="21"/>
    </location>
</feature>
<feature type="chain" id="PRO_1000005709" description="Outer-membrane lipoprotein carrier protein">
    <location>
        <begin position="22"/>
        <end position="209"/>
    </location>
</feature>
<accession>Q4UUK7</accession>
<protein>
    <recommendedName>
        <fullName evidence="1">Outer-membrane lipoprotein carrier protein</fullName>
    </recommendedName>
</protein>
<name>LOLA_XANC8</name>
<organism>
    <name type="scientific">Xanthomonas campestris pv. campestris (strain 8004)</name>
    <dbReference type="NCBI Taxonomy" id="314565"/>
    <lineage>
        <taxon>Bacteria</taxon>
        <taxon>Pseudomonadati</taxon>
        <taxon>Pseudomonadota</taxon>
        <taxon>Gammaproteobacteria</taxon>
        <taxon>Lysobacterales</taxon>
        <taxon>Lysobacteraceae</taxon>
        <taxon>Xanthomonas</taxon>
    </lineage>
</organism>
<dbReference type="EMBL" id="CP000050">
    <property type="protein sequence ID" value="AAY49266.1"/>
    <property type="molecule type" value="Genomic_DNA"/>
</dbReference>
<dbReference type="SMR" id="Q4UUK7"/>
<dbReference type="KEGG" id="xcb:XC_2211"/>
<dbReference type="HOGENOM" id="CLU_087560_0_0_6"/>
<dbReference type="PHI-base" id="PHI:8855"/>
<dbReference type="Proteomes" id="UP000000420">
    <property type="component" value="Chromosome"/>
</dbReference>
<dbReference type="GO" id="GO:0030288">
    <property type="term" value="C:outer membrane-bounded periplasmic space"/>
    <property type="evidence" value="ECO:0007669"/>
    <property type="project" value="TreeGrafter"/>
</dbReference>
<dbReference type="GO" id="GO:0044874">
    <property type="term" value="P:lipoprotein localization to outer membrane"/>
    <property type="evidence" value="ECO:0007669"/>
    <property type="project" value="UniProtKB-UniRule"/>
</dbReference>
<dbReference type="GO" id="GO:0042953">
    <property type="term" value="P:lipoprotein transport"/>
    <property type="evidence" value="ECO:0007669"/>
    <property type="project" value="InterPro"/>
</dbReference>
<dbReference type="CDD" id="cd16325">
    <property type="entry name" value="LolA"/>
    <property type="match status" value="1"/>
</dbReference>
<dbReference type="FunFam" id="2.50.20.10:FF:000006">
    <property type="entry name" value="Outer-membrane lipoprotein carrier protein"/>
    <property type="match status" value="1"/>
</dbReference>
<dbReference type="Gene3D" id="2.50.20.10">
    <property type="entry name" value="Lipoprotein localisation LolA/LolB/LppX"/>
    <property type="match status" value="1"/>
</dbReference>
<dbReference type="HAMAP" id="MF_00240">
    <property type="entry name" value="LolA"/>
    <property type="match status" value="1"/>
</dbReference>
<dbReference type="InterPro" id="IPR029046">
    <property type="entry name" value="LolA/LolB/LppX"/>
</dbReference>
<dbReference type="InterPro" id="IPR004564">
    <property type="entry name" value="OM_lipoprot_carrier_LolA-like"/>
</dbReference>
<dbReference type="InterPro" id="IPR018323">
    <property type="entry name" value="OM_lipoprot_carrier_LolA_Pbac"/>
</dbReference>
<dbReference type="NCBIfam" id="TIGR00547">
    <property type="entry name" value="lolA"/>
    <property type="match status" value="1"/>
</dbReference>
<dbReference type="PANTHER" id="PTHR35869">
    <property type="entry name" value="OUTER-MEMBRANE LIPOPROTEIN CARRIER PROTEIN"/>
    <property type="match status" value="1"/>
</dbReference>
<dbReference type="PANTHER" id="PTHR35869:SF1">
    <property type="entry name" value="OUTER-MEMBRANE LIPOPROTEIN CARRIER PROTEIN"/>
    <property type="match status" value="1"/>
</dbReference>
<dbReference type="Pfam" id="PF03548">
    <property type="entry name" value="LolA"/>
    <property type="match status" value="1"/>
</dbReference>
<dbReference type="SUPFAM" id="SSF89392">
    <property type="entry name" value="Prokaryotic lipoproteins and lipoprotein localization factors"/>
    <property type="match status" value="1"/>
</dbReference>
<proteinExistence type="inferred from homology"/>
<comment type="function">
    <text evidence="1">Participates in the translocation of lipoproteins from the inner membrane to the outer membrane. Only forms a complex with a lipoprotein if the residue after the N-terminal Cys is not an aspartate (The Asp acts as a targeting signal to indicate that the lipoprotein should stay in the inner membrane).</text>
</comment>
<comment type="subunit">
    <text evidence="1">Monomer.</text>
</comment>
<comment type="subcellular location">
    <subcellularLocation>
        <location evidence="1">Periplasm</location>
    </subcellularLocation>
</comment>
<comment type="similarity">
    <text evidence="1">Belongs to the LolA family.</text>
</comment>
<gene>
    <name evidence="1" type="primary">lolA</name>
    <name type="ordered locus">XC_2211</name>
</gene>